<name>CSOS1_PROMA</name>
<proteinExistence type="inferred from homology"/>
<organism>
    <name type="scientific">Prochlorococcus marinus (strain SARG / CCMP1375 / SS120)</name>
    <dbReference type="NCBI Taxonomy" id="167539"/>
    <lineage>
        <taxon>Bacteria</taxon>
        <taxon>Bacillati</taxon>
        <taxon>Cyanobacteriota</taxon>
        <taxon>Cyanophyceae</taxon>
        <taxon>Synechococcales</taxon>
        <taxon>Prochlorococcaceae</taxon>
        <taxon>Prochlorococcus</taxon>
    </lineage>
</organism>
<evidence type="ECO:0000250" key="1">
    <source>
        <dbReference type="UniProtKB" id="P45689"/>
    </source>
</evidence>
<evidence type="ECO:0000255" key="2">
    <source>
        <dbReference type="PROSITE-ProRule" id="PRU01278"/>
    </source>
</evidence>
<evidence type="ECO:0000305" key="3"/>
<gene>
    <name type="primary">csoS1</name>
    <name type="ordered locus">Pro_0550</name>
</gene>
<feature type="chain" id="PRO_0000201499" description="Carboxysome shell protein CsoS1">
    <location>
        <begin position="1"/>
        <end position="103"/>
    </location>
</feature>
<feature type="domain" description="BMC" evidence="2">
    <location>
        <begin position="9"/>
        <end position="94"/>
    </location>
</feature>
<sequence>MANETMGIALGMIETRGLVPAIEAADAMTKAAEVRLIGREFVGGGYVTVLVRGETGAVNAAVRAGADACERVGDGLVAAHIIARPHREVEPALGNGNFLGQKD</sequence>
<protein>
    <recommendedName>
        <fullName evidence="3">Carboxysome shell protein CsoS1</fullName>
    </recommendedName>
</protein>
<accession>P0A328</accession>
<accession>P96485</accession>
<reference key="1">
    <citation type="journal article" date="2003" name="Proc. Natl. Acad. Sci. U.S.A.">
        <title>Genome sequence of the cyanobacterium Prochlorococcus marinus SS120, a nearly minimal oxyphototrophic genome.</title>
        <authorList>
            <person name="Dufresne A."/>
            <person name="Salanoubat M."/>
            <person name="Partensky F."/>
            <person name="Artiguenave F."/>
            <person name="Axmann I.M."/>
            <person name="Barbe V."/>
            <person name="Duprat S."/>
            <person name="Galperin M.Y."/>
            <person name="Koonin E.V."/>
            <person name="Le Gall F."/>
            <person name="Makarova K.S."/>
            <person name="Ostrowski M."/>
            <person name="Oztas S."/>
            <person name="Robert C."/>
            <person name="Rogozin I.B."/>
            <person name="Scanlan D.J."/>
            <person name="Tandeau de Marsac N."/>
            <person name="Weissenbach J."/>
            <person name="Wincker P."/>
            <person name="Wolf Y.I."/>
            <person name="Hess W.R."/>
        </authorList>
    </citation>
    <scope>NUCLEOTIDE SEQUENCE [LARGE SCALE GENOMIC DNA]</scope>
    <source>
        <strain>SARG / CCMP1375 / SS120</strain>
    </source>
</reference>
<dbReference type="EMBL" id="AE017126">
    <property type="protein sequence ID" value="AAP99595.1"/>
    <property type="molecule type" value="Genomic_DNA"/>
</dbReference>
<dbReference type="RefSeq" id="NP_874943.1">
    <property type="nucleotide sequence ID" value="NC_005042.1"/>
</dbReference>
<dbReference type="RefSeq" id="WP_006169870.1">
    <property type="nucleotide sequence ID" value="NC_005042.1"/>
</dbReference>
<dbReference type="SMR" id="P0A328"/>
<dbReference type="STRING" id="167539.Pro_0550"/>
<dbReference type="EnsemblBacteria" id="AAP99595">
    <property type="protein sequence ID" value="AAP99595"/>
    <property type="gene ID" value="Pro_0550"/>
</dbReference>
<dbReference type="KEGG" id="pma:Pro_0550"/>
<dbReference type="PATRIC" id="fig|167539.5.peg.565"/>
<dbReference type="eggNOG" id="COG4577">
    <property type="taxonomic scope" value="Bacteria"/>
</dbReference>
<dbReference type="HOGENOM" id="CLU_064903_5_3_3"/>
<dbReference type="OrthoDB" id="5296101at2"/>
<dbReference type="Proteomes" id="UP000001420">
    <property type="component" value="Chromosome"/>
</dbReference>
<dbReference type="GO" id="GO:0031470">
    <property type="term" value="C:carboxysome"/>
    <property type="evidence" value="ECO:0007669"/>
    <property type="project" value="UniProtKB-SubCell"/>
</dbReference>
<dbReference type="GO" id="GO:0043886">
    <property type="term" value="F:structural constituent of carboxysome shell"/>
    <property type="evidence" value="ECO:0007669"/>
    <property type="project" value="UniProtKB-ARBA"/>
</dbReference>
<dbReference type="GO" id="GO:0015977">
    <property type="term" value="P:carbon fixation"/>
    <property type="evidence" value="ECO:0007669"/>
    <property type="project" value="UniProtKB-KW"/>
</dbReference>
<dbReference type="GO" id="GO:0015979">
    <property type="term" value="P:photosynthesis"/>
    <property type="evidence" value="ECO:0007669"/>
    <property type="project" value="UniProtKB-KW"/>
</dbReference>
<dbReference type="CDD" id="cd07058">
    <property type="entry name" value="BMC_CsoS1"/>
    <property type="match status" value="1"/>
</dbReference>
<dbReference type="Gene3D" id="3.30.70.1710">
    <property type="match status" value="1"/>
</dbReference>
<dbReference type="InterPro" id="IPR020808">
    <property type="entry name" value="Bact_microcomp_CS"/>
</dbReference>
<dbReference type="InterPro" id="IPR000249">
    <property type="entry name" value="BMC_dom"/>
</dbReference>
<dbReference type="InterPro" id="IPR050575">
    <property type="entry name" value="BMC_shell"/>
</dbReference>
<dbReference type="InterPro" id="IPR037233">
    <property type="entry name" value="CcmK-like_sf"/>
</dbReference>
<dbReference type="InterPro" id="IPR044872">
    <property type="entry name" value="CcmK/CsoS1_BMC"/>
</dbReference>
<dbReference type="PANTHER" id="PTHR33941:SF11">
    <property type="entry name" value="BACTERIAL MICROCOMPARTMENT SHELL PROTEIN PDUJ"/>
    <property type="match status" value="1"/>
</dbReference>
<dbReference type="PANTHER" id="PTHR33941">
    <property type="entry name" value="PROPANEDIOL UTILIZATION PROTEIN PDUA"/>
    <property type="match status" value="1"/>
</dbReference>
<dbReference type="Pfam" id="PF00936">
    <property type="entry name" value="BMC"/>
    <property type="match status" value="1"/>
</dbReference>
<dbReference type="SMART" id="SM00877">
    <property type="entry name" value="BMC"/>
    <property type="match status" value="1"/>
</dbReference>
<dbReference type="SUPFAM" id="SSF143414">
    <property type="entry name" value="CcmK-like"/>
    <property type="match status" value="1"/>
</dbReference>
<dbReference type="PROSITE" id="PS01139">
    <property type="entry name" value="BMC_1"/>
    <property type="match status" value="1"/>
</dbReference>
<dbReference type="PROSITE" id="PS51930">
    <property type="entry name" value="BMC_2"/>
    <property type="match status" value="1"/>
</dbReference>
<keyword id="KW-1283">Bacterial microcompartment</keyword>
<keyword id="KW-0120">Carbon dioxide fixation</keyword>
<keyword id="KW-1282">Carboxysome</keyword>
<keyword id="KW-0602">Photosynthesis</keyword>
<keyword id="KW-1185">Reference proteome</keyword>
<comment type="function">
    <text evidence="1">One of shell proteins of the carboxysome, a polyhedral inclusion where RuBisCO (ribulose bisphosphate carboxylase, ccbL-ccbS) is sequestered. Assembles into hexamers which make sheets that form the facets of the polyhedral carboxysome.</text>
</comment>
<comment type="subunit">
    <text evidence="1">Homohexamer with a small central pore. Forms a CsoS2-CsoS1-RuBisCO complex.</text>
</comment>
<comment type="subcellular location">
    <subcellularLocation>
        <location evidence="1">Carboxysome</location>
    </subcellularLocation>
    <text evidence="3">This bacterium makes alpha-type carboxysomes.</text>
</comment>
<comment type="domain">
    <text evidence="1">The tight homohexamer forms a small pore which is positively charged.</text>
</comment>
<comment type="similarity">
    <text evidence="3">Belongs to the bacterial microcompartments protein family. CsoS1 subfamily.</text>
</comment>